<keyword id="KW-0067">ATP-binding</keyword>
<keyword id="KW-0119">Carbohydrate metabolism</keyword>
<keyword id="KW-0418">Kinase</keyword>
<keyword id="KW-0547">Nucleotide-binding</keyword>
<keyword id="KW-0808">Transferase</keyword>
<sequence>MDSTTHGPRTHVPGRLFIGLMSGTSMDGADGVLVRLDGPRPEVLASASLPMPAALRDELFALNHAGANELERAALAANGLARLYARAVRQLLDQAGLQPGDVAAIGAHGQTVRHRPDLGYTLQLNAPALLAELAGIDVVADFRSRDVAAGGQGAPLVPPFHAALFAGGQARAVLNLGGIANVTLLEPGRPPRGFDTGPANVLLDAWCQRHTGQPYDADGRFAAQGQVLAGLLEHLIASEPWFALAPPKSTGRDLFNLDWLLARLQAFDGPAPQPQDVQATLQRLTARTVANAIDASAAAPRDVLVCGGGARNPGLMRELAYCLQRPVHPTDDAGVPAQWVEALAFAWLAQACLDRIPAGLPTVTGARAARVLGALYPA</sequence>
<proteinExistence type="inferred from homology"/>
<organism>
    <name type="scientific">Bordetella parapertussis (strain 12822 / ATCC BAA-587 / NCTC 13253)</name>
    <dbReference type="NCBI Taxonomy" id="257311"/>
    <lineage>
        <taxon>Bacteria</taxon>
        <taxon>Pseudomonadati</taxon>
        <taxon>Pseudomonadota</taxon>
        <taxon>Betaproteobacteria</taxon>
        <taxon>Burkholderiales</taxon>
        <taxon>Alcaligenaceae</taxon>
        <taxon>Bordetella</taxon>
    </lineage>
</organism>
<dbReference type="EC" id="2.7.1.170" evidence="1"/>
<dbReference type="EMBL" id="BX640435">
    <property type="protein sequence ID" value="CAE39162.1"/>
    <property type="molecule type" value="Genomic_DNA"/>
</dbReference>
<dbReference type="RefSeq" id="WP_003814881.1">
    <property type="nucleotide sequence ID" value="NC_002928.3"/>
</dbReference>
<dbReference type="SMR" id="Q7W3Z6"/>
<dbReference type="KEGG" id="bpa:BPP3879"/>
<dbReference type="HOGENOM" id="CLU_038782_0_0_4"/>
<dbReference type="UniPathway" id="UPA00343"/>
<dbReference type="UniPathway" id="UPA00544"/>
<dbReference type="Proteomes" id="UP000001421">
    <property type="component" value="Chromosome"/>
</dbReference>
<dbReference type="GO" id="GO:0005524">
    <property type="term" value="F:ATP binding"/>
    <property type="evidence" value="ECO:0007669"/>
    <property type="project" value="UniProtKB-UniRule"/>
</dbReference>
<dbReference type="GO" id="GO:0016301">
    <property type="term" value="F:kinase activity"/>
    <property type="evidence" value="ECO:0007669"/>
    <property type="project" value="UniProtKB-KW"/>
</dbReference>
<dbReference type="GO" id="GO:0016773">
    <property type="term" value="F:phosphotransferase activity, alcohol group as acceptor"/>
    <property type="evidence" value="ECO:0007669"/>
    <property type="project" value="UniProtKB-UniRule"/>
</dbReference>
<dbReference type="GO" id="GO:0097175">
    <property type="term" value="P:1,6-anhydro-N-acetyl-beta-muramic acid catabolic process"/>
    <property type="evidence" value="ECO:0007669"/>
    <property type="project" value="UniProtKB-UniRule"/>
</dbReference>
<dbReference type="GO" id="GO:0006040">
    <property type="term" value="P:amino sugar metabolic process"/>
    <property type="evidence" value="ECO:0007669"/>
    <property type="project" value="InterPro"/>
</dbReference>
<dbReference type="GO" id="GO:0009254">
    <property type="term" value="P:peptidoglycan turnover"/>
    <property type="evidence" value="ECO:0007669"/>
    <property type="project" value="UniProtKB-UniRule"/>
</dbReference>
<dbReference type="CDD" id="cd24050">
    <property type="entry name" value="ASKHA_NBD_ANMK"/>
    <property type="match status" value="1"/>
</dbReference>
<dbReference type="Gene3D" id="3.30.420.40">
    <property type="match status" value="2"/>
</dbReference>
<dbReference type="HAMAP" id="MF_01270">
    <property type="entry name" value="AnhMurNAc_kinase"/>
    <property type="match status" value="1"/>
</dbReference>
<dbReference type="InterPro" id="IPR005338">
    <property type="entry name" value="Anhydro_N_Ac-Mur_kinase"/>
</dbReference>
<dbReference type="InterPro" id="IPR043129">
    <property type="entry name" value="ATPase_NBD"/>
</dbReference>
<dbReference type="NCBIfam" id="NF007139">
    <property type="entry name" value="PRK09585.1-3"/>
    <property type="match status" value="1"/>
</dbReference>
<dbReference type="PANTHER" id="PTHR30605">
    <property type="entry name" value="ANHYDRO-N-ACETYLMURAMIC ACID KINASE"/>
    <property type="match status" value="1"/>
</dbReference>
<dbReference type="PANTHER" id="PTHR30605:SF0">
    <property type="entry name" value="ANHYDRO-N-ACETYLMURAMIC ACID KINASE"/>
    <property type="match status" value="1"/>
</dbReference>
<dbReference type="Pfam" id="PF03702">
    <property type="entry name" value="AnmK"/>
    <property type="match status" value="1"/>
</dbReference>
<dbReference type="SUPFAM" id="SSF53067">
    <property type="entry name" value="Actin-like ATPase domain"/>
    <property type="match status" value="1"/>
</dbReference>
<evidence type="ECO:0000255" key="1">
    <source>
        <dbReference type="HAMAP-Rule" id="MF_01270"/>
    </source>
</evidence>
<reference key="1">
    <citation type="journal article" date="2003" name="Nat. Genet.">
        <title>Comparative analysis of the genome sequences of Bordetella pertussis, Bordetella parapertussis and Bordetella bronchiseptica.</title>
        <authorList>
            <person name="Parkhill J."/>
            <person name="Sebaihia M."/>
            <person name="Preston A."/>
            <person name="Murphy L.D."/>
            <person name="Thomson N.R."/>
            <person name="Harris D.E."/>
            <person name="Holden M.T.G."/>
            <person name="Churcher C.M."/>
            <person name="Bentley S.D."/>
            <person name="Mungall K.L."/>
            <person name="Cerdeno-Tarraga A.-M."/>
            <person name="Temple L."/>
            <person name="James K.D."/>
            <person name="Harris B."/>
            <person name="Quail M.A."/>
            <person name="Achtman M."/>
            <person name="Atkin R."/>
            <person name="Baker S."/>
            <person name="Basham D."/>
            <person name="Bason N."/>
            <person name="Cherevach I."/>
            <person name="Chillingworth T."/>
            <person name="Collins M."/>
            <person name="Cronin A."/>
            <person name="Davis P."/>
            <person name="Doggett J."/>
            <person name="Feltwell T."/>
            <person name="Goble A."/>
            <person name="Hamlin N."/>
            <person name="Hauser H."/>
            <person name="Holroyd S."/>
            <person name="Jagels K."/>
            <person name="Leather S."/>
            <person name="Moule S."/>
            <person name="Norberczak H."/>
            <person name="O'Neil S."/>
            <person name="Ormond D."/>
            <person name="Price C."/>
            <person name="Rabbinowitsch E."/>
            <person name="Rutter S."/>
            <person name="Sanders M."/>
            <person name="Saunders D."/>
            <person name="Seeger K."/>
            <person name="Sharp S."/>
            <person name="Simmonds M."/>
            <person name="Skelton J."/>
            <person name="Squares R."/>
            <person name="Squares S."/>
            <person name="Stevens K."/>
            <person name="Unwin L."/>
            <person name="Whitehead S."/>
            <person name="Barrell B.G."/>
            <person name="Maskell D.J."/>
        </authorList>
    </citation>
    <scope>NUCLEOTIDE SEQUENCE [LARGE SCALE GENOMIC DNA]</scope>
    <source>
        <strain>12822 / ATCC BAA-587 / NCTC 13253</strain>
    </source>
</reference>
<name>ANMK_BORPA</name>
<gene>
    <name evidence="1" type="primary">anmK</name>
    <name type="ordered locus">BPP3879</name>
</gene>
<comment type="function">
    <text evidence="1">Catalyzes the specific phosphorylation of 1,6-anhydro-N-acetylmuramic acid (anhMurNAc) with the simultaneous cleavage of the 1,6-anhydro ring, generating MurNAc-6-P. Is required for the utilization of anhMurNAc either imported from the medium or derived from its own cell wall murein, and thus plays a role in cell wall recycling.</text>
</comment>
<comment type="catalytic activity">
    <reaction evidence="1">
        <text>1,6-anhydro-N-acetyl-beta-muramate + ATP + H2O = N-acetyl-D-muramate 6-phosphate + ADP + H(+)</text>
        <dbReference type="Rhea" id="RHEA:24952"/>
        <dbReference type="ChEBI" id="CHEBI:15377"/>
        <dbReference type="ChEBI" id="CHEBI:15378"/>
        <dbReference type="ChEBI" id="CHEBI:30616"/>
        <dbReference type="ChEBI" id="CHEBI:58690"/>
        <dbReference type="ChEBI" id="CHEBI:58722"/>
        <dbReference type="ChEBI" id="CHEBI:456216"/>
        <dbReference type="EC" id="2.7.1.170"/>
    </reaction>
</comment>
<comment type="pathway">
    <text evidence="1">Amino-sugar metabolism; 1,6-anhydro-N-acetylmuramate degradation.</text>
</comment>
<comment type="pathway">
    <text evidence="1">Cell wall biogenesis; peptidoglycan recycling.</text>
</comment>
<comment type="similarity">
    <text evidence="1">Belongs to the anhydro-N-acetylmuramic acid kinase family.</text>
</comment>
<protein>
    <recommendedName>
        <fullName evidence="1">Anhydro-N-acetylmuramic acid kinase</fullName>
        <ecNumber evidence="1">2.7.1.170</ecNumber>
    </recommendedName>
    <alternativeName>
        <fullName evidence="1">AnhMurNAc kinase</fullName>
    </alternativeName>
</protein>
<accession>Q7W3Z6</accession>
<feature type="chain" id="PRO_0000249977" description="Anhydro-N-acetylmuramic acid kinase">
    <location>
        <begin position="1"/>
        <end position="378"/>
    </location>
</feature>
<feature type="binding site" evidence="1">
    <location>
        <begin position="23"/>
        <end position="30"/>
    </location>
    <ligand>
        <name>ATP</name>
        <dbReference type="ChEBI" id="CHEBI:30616"/>
    </ligand>
</feature>